<reference key="1">
    <citation type="journal article" date="2005" name="Nat. Genet.">
        <title>The complete genome sequence of Francisella tularensis, the causative agent of tularemia.</title>
        <authorList>
            <person name="Larsson P."/>
            <person name="Oyston P.C.F."/>
            <person name="Chain P."/>
            <person name="Chu M.C."/>
            <person name="Duffield M."/>
            <person name="Fuxelius H.-H."/>
            <person name="Garcia E."/>
            <person name="Haelltorp G."/>
            <person name="Johansson D."/>
            <person name="Isherwood K.E."/>
            <person name="Karp P.D."/>
            <person name="Larsson E."/>
            <person name="Liu Y."/>
            <person name="Michell S."/>
            <person name="Prior J."/>
            <person name="Prior R."/>
            <person name="Malfatti S."/>
            <person name="Sjoestedt A."/>
            <person name="Svensson K."/>
            <person name="Thompson N."/>
            <person name="Vergez L."/>
            <person name="Wagg J.K."/>
            <person name="Wren B.W."/>
            <person name="Lindler L.E."/>
            <person name="Andersson S.G.E."/>
            <person name="Forsman M."/>
            <person name="Titball R.W."/>
        </authorList>
    </citation>
    <scope>NUCLEOTIDE SEQUENCE [LARGE SCALE GENOMIC DNA]</scope>
    <source>
        <strain>SCHU S4 / Schu 4</strain>
    </source>
</reference>
<proteinExistence type="inferred from homology"/>
<name>TOLB_FRATT</name>
<feature type="signal peptide" evidence="1">
    <location>
        <begin position="1"/>
        <end position="24"/>
    </location>
</feature>
<feature type="chain" id="PRO_0000034652" description="Tol-Pal system protein TolB" evidence="1">
    <location>
        <begin position="25"/>
        <end position="439"/>
    </location>
</feature>
<gene>
    <name evidence="1" type="primary">tolB</name>
    <name type="ordered locus">FTT_0840</name>
</gene>
<comment type="function">
    <text evidence="1">Part of the Tol-Pal system, which plays a role in outer membrane invagination during cell division and is important for maintaining outer membrane integrity.</text>
</comment>
<comment type="subunit">
    <text evidence="1">The Tol-Pal system is composed of five core proteins: the inner membrane proteins TolA, TolQ and TolR, the periplasmic protein TolB and the outer membrane protein Pal. They form a network linking the inner and outer membranes and the peptidoglycan layer.</text>
</comment>
<comment type="subcellular location">
    <subcellularLocation>
        <location evidence="1">Periplasm</location>
    </subcellularLocation>
</comment>
<comment type="similarity">
    <text evidence="1">Belongs to the TolB family.</text>
</comment>
<dbReference type="EMBL" id="AJ749949">
    <property type="protein sequence ID" value="CAG45473.1"/>
    <property type="molecule type" value="Genomic_DNA"/>
</dbReference>
<dbReference type="RefSeq" id="YP_169845.1">
    <property type="nucleotide sequence ID" value="NC_006570.2"/>
</dbReference>
<dbReference type="SMR" id="Q5NGJ7"/>
<dbReference type="STRING" id="177416.FTT_0840"/>
<dbReference type="DNASU" id="3190788"/>
<dbReference type="EnsemblBacteria" id="CAG45473">
    <property type="protein sequence ID" value="CAG45473"/>
    <property type="gene ID" value="FTT_0840"/>
</dbReference>
<dbReference type="KEGG" id="ftu:FTT_0840"/>
<dbReference type="eggNOG" id="COG0823">
    <property type="taxonomic scope" value="Bacteria"/>
</dbReference>
<dbReference type="OrthoDB" id="9802240at2"/>
<dbReference type="Proteomes" id="UP000001174">
    <property type="component" value="Chromosome"/>
</dbReference>
<dbReference type="GO" id="GO:0042597">
    <property type="term" value="C:periplasmic space"/>
    <property type="evidence" value="ECO:0007669"/>
    <property type="project" value="UniProtKB-SubCell"/>
</dbReference>
<dbReference type="GO" id="GO:0051301">
    <property type="term" value="P:cell division"/>
    <property type="evidence" value="ECO:0007669"/>
    <property type="project" value="UniProtKB-UniRule"/>
</dbReference>
<dbReference type="GO" id="GO:0017038">
    <property type="term" value="P:protein import"/>
    <property type="evidence" value="ECO:0007669"/>
    <property type="project" value="InterPro"/>
</dbReference>
<dbReference type="Gene3D" id="2.120.10.30">
    <property type="entry name" value="TolB, C-terminal domain"/>
    <property type="match status" value="1"/>
</dbReference>
<dbReference type="Gene3D" id="3.40.50.10070">
    <property type="entry name" value="TolB, N-terminal domain"/>
    <property type="match status" value="1"/>
</dbReference>
<dbReference type="HAMAP" id="MF_00671">
    <property type="entry name" value="TolB"/>
    <property type="match status" value="1"/>
</dbReference>
<dbReference type="InterPro" id="IPR011042">
    <property type="entry name" value="6-blade_b-propeller_TolB-like"/>
</dbReference>
<dbReference type="InterPro" id="IPR011659">
    <property type="entry name" value="PD40"/>
</dbReference>
<dbReference type="InterPro" id="IPR014167">
    <property type="entry name" value="Tol-Pal_TolB"/>
</dbReference>
<dbReference type="PANTHER" id="PTHR36842:SF1">
    <property type="entry name" value="PROTEIN TOLB"/>
    <property type="match status" value="1"/>
</dbReference>
<dbReference type="PANTHER" id="PTHR36842">
    <property type="entry name" value="PROTEIN TOLB HOMOLOG"/>
    <property type="match status" value="1"/>
</dbReference>
<dbReference type="Pfam" id="PF07676">
    <property type="entry name" value="PD40"/>
    <property type="match status" value="3"/>
</dbReference>
<dbReference type="SUPFAM" id="SSF52964">
    <property type="entry name" value="TolB, N-terminal domain"/>
    <property type="match status" value="1"/>
</dbReference>
<dbReference type="SUPFAM" id="SSF69304">
    <property type="entry name" value="Tricorn protease N-terminal domain"/>
    <property type="match status" value="1"/>
</dbReference>
<evidence type="ECO:0000255" key="1">
    <source>
        <dbReference type="HAMAP-Rule" id="MF_00671"/>
    </source>
</evidence>
<sequence>MRNGMRKIIAGVFIFVFLISNLYADLVAEVTTGVIQKPLVTVVSDNVVDQFPQQVNSVIVADLNHNAKLQANDTIKYEIKQKQNIPWKSLKSDYVVLTKYTNNSYNNYTVEVQILKRNDTSYLQAITYKNINVSLMRTLAHKISNYVYQKLTGNQGFFLTKLAYVKVSNPYARYGRLYELIISDYDGYNKHVVLRQTDNPIATPSWSNDGRYIVYSSYSGGSMGVYTLEIATGKVTRITNYKGINSSPSFSPDGKEIALALSKGYSDQTNIYIMNLSTKALKRITINGINTAPKFSPNGQSIVFTSDREGRPNIYVASVNSKYPQSSILSTKIHQAYEPNYTPDGKNIVFMNQSSRTSGTQIADFNLANGSVTNITNGKADSSPTVSPYGDMVAYISTNTRGYSSLDMVSLDGDNHFNIETADNGNILIQSPSWSPKNF</sequence>
<protein>
    <recommendedName>
        <fullName evidence="1">Tol-Pal system protein TolB</fullName>
    </recommendedName>
</protein>
<organism>
    <name type="scientific">Francisella tularensis subsp. tularensis (strain SCHU S4 / Schu 4)</name>
    <dbReference type="NCBI Taxonomy" id="177416"/>
    <lineage>
        <taxon>Bacteria</taxon>
        <taxon>Pseudomonadati</taxon>
        <taxon>Pseudomonadota</taxon>
        <taxon>Gammaproteobacteria</taxon>
        <taxon>Thiotrichales</taxon>
        <taxon>Francisellaceae</taxon>
        <taxon>Francisella</taxon>
    </lineage>
</organism>
<accession>Q5NGJ7</accession>
<keyword id="KW-0131">Cell cycle</keyword>
<keyword id="KW-0132">Cell division</keyword>
<keyword id="KW-0574">Periplasm</keyword>
<keyword id="KW-1185">Reference proteome</keyword>
<keyword id="KW-0732">Signal</keyword>